<accession>B3W6W7</accession>
<proteinExistence type="inferred from homology"/>
<keyword id="KW-0028">Amino-acid biosynthesis</keyword>
<keyword id="KW-0057">Aromatic amino acid biosynthesis</keyword>
<keyword id="KW-0413">Isomerase</keyword>
<keyword id="KW-0822">Tryptophan biosynthesis</keyword>
<organism>
    <name type="scientific">Lacticaseibacillus casei (strain BL23)</name>
    <name type="common">Lactobacillus casei</name>
    <dbReference type="NCBI Taxonomy" id="543734"/>
    <lineage>
        <taxon>Bacteria</taxon>
        <taxon>Bacillati</taxon>
        <taxon>Bacillota</taxon>
        <taxon>Bacilli</taxon>
        <taxon>Lactobacillales</taxon>
        <taxon>Lactobacillaceae</taxon>
        <taxon>Lacticaseibacillus</taxon>
    </lineage>
</organism>
<protein>
    <recommendedName>
        <fullName evidence="1">N-(5'-phosphoribosyl)anthranilate isomerase</fullName>
        <shortName evidence="1">PRAI</shortName>
        <ecNumber evidence="1">5.3.1.24</ecNumber>
    </recommendedName>
</protein>
<dbReference type="EC" id="5.3.1.24" evidence="1"/>
<dbReference type="EMBL" id="FM177140">
    <property type="protein sequence ID" value="CAQ65206.1"/>
    <property type="molecule type" value="Genomic_DNA"/>
</dbReference>
<dbReference type="SMR" id="B3W6W7"/>
<dbReference type="KEGG" id="lcb:LCABL_00740"/>
<dbReference type="HOGENOM" id="CLU_076364_1_0_9"/>
<dbReference type="UniPathway" id="UPA00035">
    <property type="reaction ID" value="UER00042"/>
</dbReference>
<dbReference type="GO" id="GO:0004640">
    <property type="term" value="F:phosphoribosylanthranilate isomerase activity"/>
    <property type="evidence" value="ECO:0007669"/>
    <property type="project" value="UniProtKB-UniRule"/>
</dbReference>
<dbReference type="GO" id="GO:0000162">
    <property type="term" value="P:L-tryptophan biosynthetic process"/>
    <property type="evidence" value="ECO:0007669"/>
    <property type="project" value="UniProtKB-UniRule"/>
</dbReference>
<dbReference type="CDD" id="cd00405">
    <property type="entry name" value="PRAI"/>
    <property type="match status" value="1"/>
</dbReference>
<dbReference type="Gene3D" id="3.20.20.70">
    <property type="entry name" value="Aldolase class I"/>
    <property type="match status" value="1"/>
</dbReference>
<dbReference type="HAMAP" id="MF_00135">
    <property type="entry name" value="PRAI"/>
    <property type="match status" value="1"/>
</dbReference>
<dbReference type="InterPro" id="IPR013785">
    <property type="entry name" value="Aldolase_TIM"/>
</dbReference>
<dbReference type="InterPro" id="IPR001240">
    <property type="entry name" value="PRAI_dom"/>
</dbReference>
<dbReference type="InterPro" id="IPR011060">
    <property type="entry name" value="RibuloseP-bd_barrel"/>
</dbReference>
<dbReference type="InterPro" id="IPR044643">
    <property type="entry name" value="TrpF_fam"/>
</dbReference>
<dbReference type="PANTHER" id="PTHR42894">
    <property type="entry name" value="N-(5'-PHOSPHORIBOSYL)ANTHRANILATE ISOMERASE"/>
    <property type="match status" value="1"/>
</dbReference>
<dbReference type="PANTHER" id="PTHR42894:SF1">
    <property type="entry name" value="N-(5'-PHOSPHORIBOSYL)ANTHRANILATE ISOMERASE"/>
    <property type="match status" value="1"/>
</dbReference>
<dbReference type="Pfam" id="PF00697">
    <property type="entry name" value="PRAI"/>
    <property type="match status" value="1"/>
</dbReference>
<dbReference type="SUPFAM" id="SSF51366">
    <property type="entry name" value="Ribulose-phoshate binding barrel"/>
    <property type="match status" value="1"/>
</dbReference>
<reference key="1">
    <citation type="submission" date="2008-06" db="EMBL/GenBank/DDBJ databases">
        <title>Lactobacillus casei BL23 complete genome sequence.</title>
        <authorList>
            <person name="Maze A."/>
            <person name="Boel G."/>
            <person name="Bourand A."/>
            <person name="Loux V."/>
            <person name="Gibrat J.F."/>
            <person name="Zuniga M."/>
            <person name="Hartke A."/>
            <person name="Deutscher J."/>
        </authorList>
    </citation>
    <scope>NUCLEOTIDE SEQUENCE [LARGE SCALE GENOMIC DNA]</scope>
    <source>
        <strain>BL23</strain>
    </source>
</reference>
<evidence type="ECO:0000255" key="1">
    <source>
        <dbReference type="HAMAP-Rule" id="MF_00135"/>
    </source>
</evidence>
<sequence length="199" mass="21458">MVLVKICGLMHSEDILAVNTAGADFAGFVFAPGRHQISLEQALSLKQLLHPKIKTVGVFVNEPVAEILAIYQAGAIDVAQLHGKSTPAEITQLQQAGLKVIQVFERQAIDLTSMADYLMVDSGKGSGQLLNLKAIPHISRPLILAGGLTPLNVRQAVQLVQPTMVDVSSGVETNGHKDADKITQFIQQAKEDIIYEDIK</sequence>
<feature type="chain" id="PRO_1000197104" description="N-(5'-phosphoribosyl)anthranilate isomerase">
    <location>
        <begin position="1"/>
        <end position="199"/>
    </location>
</feature>
<comment type="catalytic activity">
    <reaction evidence="1">
        <text>N-(5-phospho-beta-D-ribosyl)anthranilate = 1-(2-carboxyphenylamino)-1-deoxy-D-ribulose 5-phosphate</text>
        <dbReference type="Rhea" id="RHEA:21540"/>
        <dbReference type="ChEBI" id="CHEBI:18277"/>
        <dbReference type="ChEBI" id="CHEBI:58613"/>
        <dbReference type="EC" id="5.3.1.24"/>
    </reaction>
</comment>
<comment type="pathway">
    <text evidence="1">Amino-acid biosynthesis; L-tryptophan biosynthesis; L-tryptophan from chorismate: step 3/5.</text>
</comment>
<comment type="similarity">
    <text evidence="1">Belongs to the TrpF family.</text>
</comment>
<name>TRPF_LACCB</name>
<gene>
    <name evidence="1" type="primary">trpF</name>
    <name type="ordered locus">LCABL_00740</name>
</gene>